<sequence length="92" mass="10254">MTSSRFIITVIGSDRVGIVARITTVMASYNVNIVDISQTIMQGIFTMIMLAEAPKENFDLAAFQQAMDAEGKSLGVEVKVQHEDAFRFMHRI</sequence>
<accession>Q8Q0Q4</accession>
<evidence type="ECO:0000255" key="1">
    <source>
        <dbReference type="HAMAP-Rule" id="MF_01054"/>
    </source>
</evidence>
<gene>
    <name type="ordered locus">MM_0082</name>
</gene>
<organism>
    <name type="scientific">Methanosarcina mazei (strain ATCC BAA-159 / DSM 3647 / Goe1 / Go1 / JCM 11833 / OCM 88)</name>
    <name type="common">Methanosarcina frisia</name>
    <dbReference type="NCBI Taxonomy" id="192952"/>
    <lineage>
        <taxon>Archaea</taxon>
        <taxon>Methanobacteriati</taxon>
        <taxon>Methanobacteriota</taxon>
        <taxon>Stenosarchaea group</taxon>
        <taxon>Methanomicrobia</taxon>
        <taxon>Methanosarcinales</taxon>
        <taxon>Methanosarcinaceae</taxon>
        <taxon>Methanosarcina</taxon>
    </lineage>
</organism>
<protein>
    <recommendedName>
        <fullName evidence="1">UPF0237 protein MM_0082</fullName>
    </recommendedName>
</protein>
<name>Y082_METMA</name>
<dbReference type="EMBL" id="AE008384">
    <property type="protein sequence ID" value="AAM29778.1"/>
    <property type="molecule type" value="Genomic_DNA"/>
</dbReference>
<dbReference type="RefSeq" id="WP_011032036.1">
    <property type="nucleotide sequence ID" value="NC_003901.1"/>
</dbReference>
<dbReference type="SMR" id="Q8Q0Q4"/>
<dbReference type="KEGG" id="mma:MM_0082"/>
<dbReference type="PATRIC" id="fig|192952.21.peg.95"/>
<dbReference type="eggNOG" id="arCOG04941">
    <property type="taxonomic scope" value="Archaea"/>
</dbReference>
<dbReference type="HOGENOM" id="CLU_155669_0_1_2"/>
<dbReference type="Proteomes" id="UP000000595">
    <property type="component" value="Chromosome"/>
</dbReference>
<dbReference type="CDD" id="cd04872">
    <property type="entry name" value="ACT_1ZPV"/>
    <property type="match status" value="1"/>
</dbReference>
<dbReference type="FunFam" id="3.30.70.260:FF:000032">
    <property type="entry name" value="UPF0237 protein SP_0238"/>
    <property type="match status" value="1"/>
</dbReference>
<dbReference type="Gene3D" id="3.30.70.260">
    <property type="match status" value="1"/>
</dbReference>
<dbReference type="HAMAP" id="MF_01054">
    <property type="entry name" value="UPF0237"/>
    <property type="match status" value="1"/>
</dbReference>
<dbReference type="InterPro" id="IPR045865">
    <property type="entry name" value="ACT-like_dom_sf"/>
</dbReference>
<dbReference type="InterPro" id="IPR002912">
    <property type="entry name" value="ACT_dom"/>
</dbReference>
<dbReference type="InterPro" id="IPR050990">
    <property type="entry name" value="UPF0237/GcvR_regulator"/>
</dbReference>
<dbReference type="InterPro" id="IPR022986">
    <property type="entry name" value="UPF0237_ACT"/>
</dbReference>
<dbReference type="NCBIfam" id="NF001220">
    <property type="entry name" value="PRK00194.1"/>
    <property type="match status" value="1"/>
</dbReference>
<dbReference type="PANTHER" id="PTHR34875">
    <property type="entry name" value="UPF0237 PROTEIN MJ1558"/>
    <property type="match status" value="1"/>
</dbReference>
<dbReference type="PANTHER" id="PTHR34875:SF6">
    <property type="entry name" value="UPF0237 PROTEIN MJ1558"/>
    <property type="match status" value="1"/>
</dbReference>
<dbReference type="Pfam" id="PF13740">
    <property type="entry name" value="ACT_6"/>
    <property type="match status" value="1"/>
</dbReference>
<dbReference type="SUPFAM" id="SSF55021">
    <property type="entry name" value="ACT-like"/>
    <property type="match status" value="1"/>
</dbReference>
<dbReference type="PROSITE" id="PS51671">
    <property type="entry name" value="ACT"/>
    <property type="match status" value="1"/>
</dbReference>
<comment type="similarity">
    <text evidence="1">Belongs to the UPF0237 family.</text>
</comment>
<feature type="chain" id="PRO_0000219912" description="UPF0237 protein MM_0082">
    <location>
        <begin position="1"/>
        <end position="92"/>
    </location>
</feature>
<feature type="domain" description="ACT" evidence="1">
    <location>
        <begin position="7"/>
        <end position="81"/>
    </location>
</feature>
<proteinExistence type="inferred from homology"/>
<reference key="1">
    <citation type="journal article" date="2002" name="J. Mol. Microbiol. Biotechnol.">
        <title>The genome of Methanosarcina mazei: evidence for lateral gene transfer between Bacteria and Archaea.</title>
        <authorList>
            <person name="Deppenmeier U."/>
            <person name="Johann A."/>
            <person name="Hartsch T."/>
            <person name="Merkl R."/>
            <person name="Schmitz R.A."/>
            <person name="Martinez-Arias R."/>
            <person name="Henne A."/>
            <person name="Wiezer A."/>
            <person name="Baeumer S."/>
            <person name="Jacobi C."/>
            <person name="Brueggemann H."/>
            <person name="Lienard T."/>
            <person name="Christmann A."/>
            <person name="Boemecke M."/>
            <person name="Steckel S."/>
            <person name="Bhattacharyya A."/>
            <person name="Lykidis A."/>
            <person name="Overbeek R."/>
            <person name="Klenk H.-P."/>
            <person name="Gunsalus R.P."/>
            <person name="Fritz H.-J."/>
            <person name="Gottschalk G."/>
        </authorList>
    </citation>
    <scope>NUCLEOTIDE SEQUENCE [LARGE SCALE GENOMIC DNA]</scope>
    <source>
        <strain>ATCC BAA-159 / DSM 3647 / Goe1 / Go1 / JCM 11833 / OCM 88</strain>
    </source>
</reference>